<keyword id="KW-0560">Oxidoreductase</keyword>
<keyword id="KW-0819">tRNA processing</keyword>
<comment type="function">
    <text evidence="1">Catalyzes oxygen-dependent 5-hydroxyuridine (ho5U) modification at position 34 in tRNAs.</text>
</comment>
<comment type="catalytic activity">
    <reaction evidence="1">
        <text>uridine(34) in tRNA + AH2 + O2 = 5-hydroxyuridine(34) in tRNA + A + H2O</text>
        <dbReference type="Rhea" id="RHEA:64224"/>
        <dbReference type="Rhea" id="RHEA-COMP:11727"/>
        <dbReference type="Rhea" id="RHEA-COMP:13381"/>
        <dbReference type="ChEBI" id="CHEBI:13193"/>
        <dbReference type="ChEBI" id="CHEBI:15377"/>
        <dbReference type="ChEBI" id="CHEBI:15379"/>
        <dbReference type="ChEBI" id="CHEBI:17499"/>
        <dbReference type="ChEBI" id="CHEBI:65315"/>
        <dbReference type="ChEBI" id="CHEBI:136877"/>
    </reaction>
</comment>
<comment type="similarity">
    <text evidence="1">Belongs to the TrhO family.</text>
</comment>
<name>TRHO_FRATO</name>
<protein>
    <recommendedName>
        <fullName evidence="1">tRNA uridine(34) hydroxylase</fullName>
        <ecNumber evidence="1">1.14.-.-</ecNumber>
    </recommendedName>
    <alternativeName>
        <fullName evidence="1">tRNA hydroxylation protein O</fullName>
    </alternativeName>
</protein>
<sequence>MSQIVVCAMYKFVTLEDFEAMRQPLLDTMIKNNVKGTLLLANEGINGTVAGTRESIDNLLAYLKADPRLVDIDYKESYHQEMPFYRSKVKLKKEIVTLGIDEIDPNKICGKYVEPKDWNDLISDPETVLIDTRNEYEIEIGTFKNAINPHTENFREFPQYVDENLDPKKHKKVAMFCTGGIRCEKSTALLKAKGFDEVYHLKGGILKYLEEVPKEKSMWQGECFVFDSRVAVNHDLEKGNYDQCFACRMPITEDDKKRPEYVKGISCHHCYDKVTEKQKARFAEREKQSQLAAEKGFSHVGDEAKKLAQLNKQKKQQAKEAARKKAQQ</sequence>
<gene>
    <name evidence="1" type="primary">trhO</name>
    <name type="ordered locus">FTH_1091</name>
</gene>
<proteinExistence type="inferred from homology"/>
<reference key="1">
    <citation type="journal article" date="2006" name="J. Bacteriol.">
        <title>Chromosome rearrangement and diversification of Francisella tularensis revealed by the type B (OSU18) genome sequence.</title>
        <authorList>
            <person name="Petrosino J.F."/>
            <person name="Xiang Q."/>
            <person name="Karpathy S.E."/>
            <person name="Jiang H."/>
            <person name="Yerrapragada S."/>
            <person name="Liu Y."/>
            <person name="Gioia J."/>
            <person name="Hemphill L."/>
            <person name="Gonzalez A."/>
            <person name="Raghavan T.M."/>
            <person name="Uzman A."/>
            <person name="Fox G.E."/>
            <person name="Highlander S."/>
            <person name="Reichard M."/>
            <person name="Morton R.J."/>
            <person name="Clinkenbeard K.D."/>
            <person name="Weinstock G.M."/>
        </authorList>
    </citation>
    <scope>NUCLEOTIDE SEQUENCE [LARGE SCALE GENOMIC DNA]</scope>
    <source>
        <strain>OSU18</strain>
    </source>
</reference>
<dbReference type="EC" id="1.14.-.-" evidence="1"/>
<dbReference type="EMBL" id="CP000437">
    <property type="protein sequence ID" value="ABI82964.1"/>
    <property type="molecule type" value="Genomic_DNA"/>
</dbReference>
<dbReference type="RefSeq" id="WP_003016080.1">
    <property type="nucleotide sequence ID" value="NC_017463.1"/>
</dbReference>
<dbReference type="SMR" id="Q0BLS0"/>
<dbReference type="KEGG" id="fth:FTH_1091"/>
<dbReference type="GO" id="GO:0016705">
    <property type="term" value="F:oxidoreductase activity, acting on paired donors, with incorporation or reduction of molecular oxygen"/>
    <property type="evidence" value="ECO:0007669"/>
    <property type="project" value="UniProtKB-UniRule"/>
</dbReference>
<dbReference type="GO" id="GO:0006400">
    <property type="term" value="P:tRNA modification"/>
    <property type="evidence" value="ECO:0007669"/>
    <property type="project" value="UniProtKB-UniRule"/>
</dbReference>
<dbReference type="CDD" id="cd01518">
    <property type="entry name" value="RHOD_YceA"/>
    <property type="match status" value="1"/>
</dbReference>
<dbReference type="Gene3D" id="3.30.70.100">
    <property type="match status" value="1"/>
</dbReference>
<dbReference type="Gene3D" id="3.40.250.10">
    <property type="entry name" value="Rhodanese-like domain"/>
    <property type="match status" value="1"/>
</dbReference>
<dbReference type="HAMAP" id="MF_00469">
    <property type="entry name" value="TrhO"/>
    <property type="match status" value="1"/>
</dbReference>
<dbReference type="InterPro" id="IPR001763">
    <property type="entry name" value="Rhodanese-like_dom"/>
</dbReference>
<dbReference type="InterPro" id="IPR036873">
    <property type="entry name" value="Rhodanese-like_dom_sf"/>
</dbReference>
<dbReference type="InterPro" id="IPR020936">
    <property type="entry name" value="TrhO"/>
</dbReference>
<dbReference type="InterPro" id="IPR040503">
    <property type="entry name" value="TRHO_N"/>
</dbReference>
<dbReference type="NCBIfam" id="NF001136">
    <property type="entry name" value="PRK00142.1-4"/>
    <property type="match status" value="1"/>
</dbReference>
<dbReference type="PANTHER" id="PTHR43268:SF3">
    <property type="entry name" value="RHODANESE-LIKE DOMAIN-CONTAINING PROTEIN 7-RELATED"/>
    <property type="match status" value="1"/>
</dbReference>
<dbReference type="PANTHER" id="PTHR43268">
    <property type="entry name" value="THIOSULFATE SULFURTRANSFERASE/RHODANESE-LIKE DOMAIN-CONTAINING PROTEIN 2"/>
    <property type="match status" value="1"/>
</dbReference>
<dbReference type="Pfam" id="PF00581">
    <property type="entry name" value="Rhodanese"/>
    <property type="match status" value="1"/>
</dbReference>
<dbReference type="Pfam" id="PF17773">
    <property type="entry name" value="UPF0176_N"/>
    <property type="match status" value="1"/>
</dbReference>
<dbReference type="SMART" id="SM00450">
    <property type="entry name" value="RHOD"/>
    <property type="match status" value="1"/>
</dbReference>
<dbReference type="SUPFAM" id="SSF52821">
    <property type="entry name" value="Rhodanese/Cell cycle control phosphatase"/>
    <property type="match status" value="1"/>
</dbReference>
<dbReference type="PROSITE" id="PS50206">
    <property type="entry name" value="RHODANESE_3"/>
    <property type="match status" value="1"/>
</dbReference>
<organism>
    <name type="scientific">Francisella tularensis subsp. holarctica (strain OSU18)</name>
    <dbReference type="NCBI Taxonomy" id="393011"/>
    <lineage>
        <taxon>Bacteria</taxon>
        <taxon>Pseudomonadati</taxon>
        <taxon>Pseudomonadota</taxon>
        <taxon>Gammaproteobacteria</taxon>
        <taxon>Thiotrichales</taxon>
        <taxon>Francisellaceae</taxon>
        <taxon>Francisella</taxon>
    </lineage>
</organism>
<accession>Q0BLS0</accession>
<feature type="chain" id="PRO_1000013742" description="tRNA uridine(34) hydroxylase">
    <location>
        <begin position="1"/>
        <end position="328"/>
    </location>
</feature>
<feature type="domain" description="Rhodanese" evidence="1">
    <location>
        <begin position="123"/>
        <end position="217"/>
    </location>
</feature>
<feature type="region of interest" description="Disordered" evidence="2">
    <location>
        <begin position="304"/>
        <end position="328"/>
    </location>
</feature>
<feature type="compositionally biased region" description="Basic and acidic residues" evidence="2">
    <location>
        <begin position="317"/>
        <end position="328"/>
    </location>
</feature>
<feature type="active site" description="Cysteine persulfide intermediate" evidence="1">
    <location>
        <position position="177"/>
    </location>
</feature>
<evidence type="ECO:0000255" key="1">
    <source>
        <dbReference type="HAMAP-Rule" id="MF_00469"/>
    </source>
</evidence>
<evidence type="ECO:0000256" key="2">
    <source>
        <dbReference type="SAM" id="MobiDB-lite"/>
    </source>
</evidence>